<accession>Q3Z5W3</accession>
<keyword id="KW-0997">Cell inner membrane</keyword>
<keyword id="KW-1003">Cell membrane</keyword>
<keyword id="KW-0285">Flavoprotein</keyword>
<keyword id="KW-0288">FMN</keyword>
<keyword id="KW-0472">Membrane</keyword>
<keyword id="KW-0520">NAD</keyword>
<keyword id="KW-0560">Oxidoreductase</keyword>
<keyword id="KW-1185">Reference proteome</keyword>
<feature type="chain" id="PRO_1000068473" description="Glutathione-regulated potassium-efflux system ancillary protein KefF">
    <location>
        <begin position="1"/>
        <end position="176"/>
    </location>
</feature>
<feature type="binding site" evidence="1">
    <location>
        <position position="8"/>
    </location>
    <ligand>
        <name>FMN</name>
        <dbReference type="ChEBI" id="CHEBI:58210"/>
    </ligand>
</feature>
<feature type="binding site" evidence="1">
    <location>
        <begin position="14"/>
        <end position="17"/>
    </location>
    <ligand>
        <name>FMN</name>
        <dbReference type="ChEBI" id="CHEBI:58210"/>
    </ligand>
</feature>
<feature type="binding site" evidence="1">
    <location>
        <begin position="65"/>
        <end position="68"/>
    </location>
    <ligand>
        <name>FMN</name>
        <dbReference type="ChEBI" id="CHEBI:58210"/>
    </ligand>
</feature>
<feature type="binding site" evidence="1">
    <location>
        <begin position="105"/>
        <end position="108"/>
    </location>
    <ligand>
        <name>FMN</name>
        <dbReference type="ChEBI" id="CHEBI:58210"/>
    </ligand>
</feature>
<gene>
    <name evidence="1" type="primary">kefF</name>
    <name type="ordered locus">SSON_0054</name>
</gene>
<protein>
    <recommendedName>
        <fullName evidence="1">Glutathione-regulated potassium-efflux system ancillary protein KefF</fullName>
    </recommendedName>
    <alternativeName>
        <fullName evidence="1">Quinone oxidoreductase KefF</fullName>
        <ecNumber evidence="1">1.6.5.2</ecNumber>
    </alternativeName>
</protein>
<reference key="1">
    <citation type="journal article" date="2005" name="Nucleic Acids Res.">
        <title>Genome dynamics and diversity of Shigella species, the etiologic agents of bacillary dysentery.</title>
        <authorList>
            <person name="Yang F."/>
            <person name="Yang J."/>
            <person name="Zhang X."/>
            <person name="Chen L."/>
            <person name="Jiang Y."/>
            <person name="Yan Y."/>
            <person name="Tang X."/>
            <person name="Wang J."/>
            <person name="Xiong Z."/>
            <person name="Dong J."/>
            <person name="Xue Y."/>
            <person name="Zhu Y."/>
            <person name="Xu X."/>
            <person name="Sun L."/>
            <person name="Chen S."/>
            <person name="Nie H."/>
            <person name="Peng J."/>
            <person name="Xu J."/>
            <person name="Wang Y."/>
            <person name="Yuan Z."/>
            <person name="Wen Y."/>
            <person name="Yao Z."/>
            <person name="Shen Y."/>
            <person name="Qiang B."/>
            <person name="Hou Y."/>
            <person name="Yu J."/>
            <person name="Jin Q."/>
        </authorList>
    </citation>
    <scope>NUCLEOTIDE SEQUENCE [LARGE SCALE GENOMIC DNA]</scope>
    <source>
        <strain>Ss046</strain>
    </source>
</reference>
<name>KEFF_SHISS</name>
<evidence type="ECO:0000255" key="1">
    <source>
        <dbReference type="HAMAP-Rule" id="MF_01414"/>
    </source>
</evidence>
<proteinExistence type="inferred from homology"/>
<dbReference type="EC" id="1.6.5.2" evidence="1"/>
<dbReference type="EMBL" id="CP000038">
    <property type="protein sequence ID" value="AAZ86849.1"/>
    <property type="molecule type" value="Genomic_DNA"/>
</dbReference>
<dbReference type="RefSeq" id="WP_000600736.1">
    <property type="nucleotide sequence ID" value="NC_007384.1"/>
</dbReference>
<dbReference type="SMR" id="Q3Z5W3"/>
<dbReference type="GeneID" id="93777389"/>
<dbReference type="KEGG" id="ssn:SSON_0054"/>
<dbReference type="HOGENOM" id="CLU_058643_0_1_6"/>
<dbReference type="Proteomes" id="UP000002529">
    <property type="component" value="Chromosome"/>
</dbReference>
<dbReference type="GO" id="GO:0005886">
    <property type="term" value="C:plasma membrane"/>
    <property type="evidence" value="ECO:0007669"/>
    <property type="project" value="UniProtKB-SubCell"/>
</dbReference>
<dbReference type="GO" id="GO:0009055">
    <property type="term" value="F:electron transfer activity"/>
    <property type="evidence" value="ECO:0007669"/>
    <property type="project" value="TreeGrafter"/>
</dbReference>
<dbReference type="GO" id="GO:0010181">
    <property type="term" value="F:FMN binding"/>
    <property type="evidence" value="ECO:0007669"/>
    <property type="project" value="UniProtKB-UniRule"/>
</dbReference>
<dbReference type="GO" id="GO:0050136">
    <property type="term" value="F:NADH:ubiquinone reductase (non-electrogenic) activity"/>
    <property type="evidence" value="ECO:0007669"/>
    <property type="project" value="RHEA"/>
</dbReference>
<dbReference type="GO" id="GO:0008753">
    <property type="term" value="F:NADPH dehydrogenase (quinone) activity"/>
    <property type="evidence" value="ECO:0007669"/>
    <property type="project" value="RHEA"/>
</dbReference>
<dbReference type="GO" id="GO:1901381">
    <property type="term" value="P:positive regulation of potassium ion transmembrane transport"/>
    <property type="evidence" value="ECO:0007669"/>
    <property type="project" value="UniProtKB-UniRule"/>
</dbReference>
<dbReference type="GO" id="GO:0006813">
    <property type="term" value="P:potassium ion transport"/>
    <property type="evidence" value="ECO:0007669"/>
    <property type="project" value="InterPro"/>
</dbReference>
<dbReference type="FunFam" id="3.40.50.360:FF:000008">
    <property type="entry name" value="Glutathione-regulated potassium-efflux system ancillary protein KefF"/>
    <property type="match status" value="1"/>
</dbReference>
<dbReference type="Gene3D" id="3.40.50.360">
    <property type="match status" value="1"/>
</dbReference>
<dbReference type="HAMAP" id="MF_01414">
    <property type="entry name" value="K_H_efflux_KefF"/>
    <property type="match status" value="1"/>
</dbReference>
<dbReference type="InterPro" id="IPR003680">
    <property type="entry name" value="Flavodoxin_fold"/>
</dbReference>
<dbReference type="InterPro" id="IPR029039">
    <property type="entry name" value="Flavoprotein-like_sf"/>
</dbReference>
<dbReference type="InterPro" id="IPR023948">
    <property type="entry name" value="K_H_efflux_KefF"/>
</dbReference>
<dbReference type="InterPro" id="IPR046980">
    <property type="entry name" value="KefG/KefF"/>
</dbReference>
<dbReference type="NCBIfam" id="NF002044">
    <property type="entry name" value="PRK00871.1"/>
    <property type="match status" value="1"/>
</dbReference>
<dbReference type="PANTHER" id="PTHR47307:SF2">
    <property type="entry name" value="GLUTATHIONE-REGULATED POTASSIUM-EFFLUX SYSTEM ANCILLARY PROTEIN KEFF"/>
    <property type="match status" value="1"/>
</dbReference>
<dbReference type="PANTHER" id="PTHR47307">
    <property type="entry name" value="GLUTATHIONE-REGULATED POTASSIUM-EFFLUX SYSTEM ANCILLARY PROTEIN KEFG"/>
    <property type="match status" value="1"/>
</dbReference>
<dbReference type="Pfam" id="PF02525">
    <property type="entry name" value="Flavodoxin_2"/>
    <property type="match status" value="1"/>
</dbReference>
<dbReference type="SUPFAM" id="SSF52218">
    <property type="entry name" value="Flavoproteins"/>
    <property type="match status" value="1"/>
</dbReference>
<organism>
    <name type="scientific">Shigella sonnei (strain Ss046)</name>
    <dbReference type="NCBI Taxonomy" id="300269"/>
    <lineage>
        <taxon>Bacteria</taxon>
        <taxon>Pseudomonadati</taxon>
        <taxon>Pseudomonadota</taxon>
        <taxon>Gammaproteobacteria</taxon>
        <taxon>Enterobacterales</taxon>
        <taxon>Enterobacteriaceae</taxon>
        <taxon>Shigella</taxon>
    </lineage>
</organism>
<comment type="function">
    <text evidence="1">Regulatory subunit of a potassium efflux system that confers protection against electrophiles. Required for full activity of KefC. Shows redox enzymatic activity, but this enzymatic activity is not required for activation of KefC.</text>
</comment>
<comment type="catalytic activity">
    <reaction evidence="1">
        <text>a quinone + NADH + H(+) = a quinol + NAD(+)</text>
        <dbReference type="Rhea" id="RHEA:46160"/>
        <dbReference type="ChEBI" id="CHEBI:15378"/>
        <dbReference type="ChEBI" id="CHEBI:24646"/>
        <dbReference type="ChEBI" id="CHEBI:57540"/>
        <dbReference type="ChEBI" id="CHEBI:57945"/>
        <dbReference type="ChEBI" id="CHEBI:132124"/>
        <dbReference type="EC" id="1.6.5.2"/>
    </reaction>
</comment>
<comment type="catalytic activity">
    <reaction evidence="1">
        <text>a quinone + NADPH + H(+) = a quinol + NADP(+)</text>
        <dbReference type="Rhea" id="RHEA:46164"/>
        <dbReference type="ChEBI" id="CHEBI:15378"/>
        <dbReference type="ChEBI" id="CHEBI:24646"/>
        <dbReference type="ChEBI" id="CHEBI:57783"/>
        <dbReference type="ChEBI" id="CHEBI:58349"/>
        <dbReference type="ChEBI" id="CHEBI:132124"/>
        <dbReference type="EC" id="1.6.5.2"/>
    </reaction>
</comment>
<comment type="cofactor">
    <cofactor evidence="1">
        <name>FMN</name>
        <dbReference type="ChEBI" id="CHEBI:58210"/>
    </cofactor>
</comment>
<comment type="subunit">
    <text evidence="1">Homodimer. Interacts with KefC.</text>
</comment>
<comment type="subcellular location">
    <subcellularLocation>
        <location evidence="1">Cell inner membrane</location>
        <topology evidence="1">Peripheral membrane protein</topology>
        <orientation evidence="1">Cytoplasmic side</orientation>
    </subcellularLocation>
</comment>
<comment type="similarity">
    <text evidence="1">Belongs to the NAD(P)H dehydrogenase (quinone) family. KefF subfamily.</text>
</comment>
<sequence>MILIIYAHPYPHHSHANKRMLEQARTLEGVEIRSLYQLYPDFNIDIAAEQEALSRADLIVWQHPMQWYSIPPLLKLWIDKVLSHGWAYGHGGKALHGKYLLWAVTTGGGESHFEIGAHPGFDVLSQPLQATAIYCGLNWLPPFAMHCTFICDDETLEGQARHYKQRLLEWQEAHHG</sequence>